<name>TRM52_ARATH</name>
<comment type="function">
    <text evidence="1">Specifically methylates the N1 position of guanosine-37 in various cytoplasmic and mitochondrial tRNAs. Methylation is not dependent on the nature of the nucleoside 5' of the target nucleoside. This is the first step in the biosynthesis of wybutosine (yW), a modified base adjacent to the anticodon of tRNAs and required for accurate decoding.</text>
</comment>
<comment type="catalytic activity">
    <reaction evidence="1">
        <text>guanosine(37) in tRNA + S-adenosyl-L-methionine = N(1)-methylguanosine(37) in tRNA + S-adenosyl-L-homocysteine + H(+)</text>
        <dbReference type="Rhea" id="RHEA:36899"/>
        <dbReference type="Rhea" id="RHEA-COMP:10145"/>
        <dbReference type="Rhea" id="RHEA-COMP:10147"/>
        <dbReference type="ChEBI" id="CHEBI:15378"/>
        <dbReference type="ChEBI" id="CHEBI:57856"/>
        <dbReference type="ChEBI" id="CHEBI:59789"/>
        <dbReference type="ChEBI" id="CHEBI:73542"/>
        <dbReference type="ChEBI" id="CHEBI:74269"/>
        <dbReference type="EC" id="2.1.1.228"/>
    </reaction>
</comment>
<comment type="subunit">
    <text evidence="1">Monomer.</text>
</comment>
<comment type="subcellular location">
    <subcellularLocation>
        <location evidence="1">Mitochondrion matrix</location>
    </subcellularLocation>
    <subcellularLocation>
        <location evidence="1">Nucleus</location>
    </subcellularLocation>
    <subcellularLocation>
        <location evidence="1">Cytoplasm</location>
    </subcellularLocation>
    <text evidence="1">Predominantly in the mitochondria and in the nucleus.</text>
</comment>
<comment type="similarity">
    <text evidence="2">Belongs to the class I-like SAM-binding methyltransferase superfamily. TRM5/TYW2 family.</text>
</comment>
<comment type="sequence caution" evidence="2">
    <conflict type="erroneous gene model prediction">
        <sequence resource="EMBL-CDS" id="CAA19728"/>
    </conflict>
</comment>
<comment type="sequence caution" evidence="2">
    <conflict type="erroneous gene model prediction">
        <sequence resource="EMBL-CDS" id="CAB79589"/>
    </conflict>
</comment>
<feature type="transit peptide" description="Mitochondrion" evidence="1">
    <location>
        <begin position="1"/>
        <end position="10"/>
    </location>
</feature>
<feature type="chain" id="PRO_0000414137" description="tRNA (guanine(37)-N(1))-methyltransferase 2">
    <location>
        <begin position="11"/>
        <end position="619"/>
    </location>
</feature>
<feature type="binding site" evidence="1">
    <location>
        <position position="434"/>
    </location>
    <ligand>
        <name>S-adenosyl-L-methionine</name>
        <dbReference type="ChEBI" id="CHEBI:59789"/>
    </ligand>
</feature>
<feature type="binding site" evidence="1">
    <location>
        <begin position="472"/>
        <end position="473"/>
    </location>
    <ligand>
        <name>S-adenosyl-L-methionine</name>
        <dbReference type="ChEBI" id="CHEBI:59789"/>
    </ligand>
</feature>
<feature type="binding site" evidence="1">
    <location>
        <begin position="500"/>
        <end position="501"/>
    </location>
    <ligand>
        <name>S-adenosyl-L-methionine</name>
        <dbReference type="ChEBI" id="CHEBI:59789"/>
    </ligand>
</feature>
<feature type="binding site" evidence="1">
    <location>
        <position position="523"/>
    </location>
    <ligand>
        <name>S-adenosyl-L-methionine</name>
        <dbReference type="ChEBI" id="CHEBI:59789"/>
    </ligand>
</feature>
<dbReference type="EC" id="2.1.1.228" evidence="1"/>
<dbReference type="EMBL" id="AL030978">
    <property type="protein sequence ID" value="CAA19728.1"/>
    <property type="status" value="ALT_SEQ"/>
    <property type="molecule type" value="Genomic_DNA"/>
</dbReference>
<dbReference type="EMBL" id="AL078467">
    <property type="status" value="NOT_ANNOTATED_CDS"/>
    <property type="molecule type" value="Genomic_DNA"/>
</dbReference>
<dbReference type="EMBL" id="AL161566">
    <property type="protein sequence ID" value="CAB79589.1"/>
    <property type="status" value="ALT_SEQ"/>
    <property type="molecule type" value="Genomic_DNA"/>
</dbReference>
<dbReference type="EMBL" id="CP002687">
    <property type="protein sequence ID" value="AEE85326.1"/>
    <property type="molecule type" value="Genomic_DNA"/>
</dbReference>
<dbReference type="EMBL" id="BT010598">
    <property type="protein sequence ID" value="AAQ89620.1"/>
    <property type="molecule type" value="mRNA"/>
</dbReference>
<dbReference type="EMBL" id="AK227004">
    <property type="protein sequence ID" value="BAE99069.1"/>
    <property type="molecule type" value="mRNA"/>
</dbReference>
<dbReference type="PIR" id="T05758">
    <property type="entry name" value="T05758"/>
</dbReference>
<dbReference type="RefSeq" id="NP_194464.3">
    <property type="nucleotide sequence ID" value="NM_118868.5"/>
</dbReference>
<dbReference type="SMR" id="Q6NQ64"/>
<dbReference type="BioGRID" id="14129">
    <property type="interactions" value="1"/>
</dbReference>
<dbReference type="FunCoup" id="Q6NQ64">
    <property type="interactions" value="308"/>
</dbReference>
<dbReference type="STRING" id="3702.Q6NQ64"/>
<dbReference type="iPTMnet" id="Q6NQ64"/>
<dbReference type="PaxDb" id="3702-AT4G27340.1"/>
<dbReference type="ProteomicsDB" id="232442"/>
<dbReference type="EnsemblPlants" id="AT4G27340.1">
    <property type="protein sequence ID" value="AT4G27340.1"/>
    <property type="gene ID" value="AT4G27340"/>
</dbReference>
<dbReference type="GeneID" id="828842"/>
<dbReference type="Gramene" id="AT4G27340.1">
    <property type="protein sequence ID" value="AT4G27340.1"/>
    <property type="gene ID" value="AT4G27340"/>
</dbReference>
<dbReference type="KEGG" id="ath:AT4G27340"/>
<dbReference type="Araport" id="AT4G27340"/>
<dbReference type="TAIR" id="AT4G27340">
    <property type="gene designation" value="TRM5B"/>
</dbReference>
<dbReference type="eggNOG" id="KOG2078">
    <property type="taxonomic scope" value="Eukaryota"/>
</dbReference>
<dbReference type="HOGENOM" id="CLU_034422_1_0_1"/>
<dbReference type="InParanoid" id="Q6NQ64"/>
<dbReference type="PhylomeDB" id="Q6NQ64"/>
<dbReference type="PRO" id="PR:Q6NQ64"/>
<dbReference type="Proteomes" id="UP000006548">
    <property type="component" value="Chromosome 4"/>
</dbReference>
<dbReference type="ExpressionAtlas" id="Q6NQ64">
    <property type="expression patterns" value="baseline and differential"/>
</dbReference>
<dbReference type="GO" id="GO:0005759">
    <property type="term" value="C:mitochondrial matrix"/>
    <property type="evidence" value="ECO:0007669"/>
    <property type="project" value="UniProtKB-SubCell"/>
</dbReference>
<dbReference type="GO" id="GO:0005634">
    <property type="term" value="C:nucleus"/>
    <property type="evidence" value="ECO:0007669"/>
    <property type="project" value="UniProtKB-SubCell"/>
</dbReference>
<dbReference type="GO" id="GO:0052906">
    <property type="term" value="F:tRNA (guanine(37)-N1)-methyltransferase activity"/>
    <property type="evidence" value="ECO:0007669"/>
    <property type="project" value="UniProtKB-UniRule"/>
</dbReference>
<dbReference type="GO" id="GO:0030488">
    <property type="term" value="P:tRNA methylation"/>
    <property type="evidence" value="ECO:0007669"/>
    <property type="project" value="UniProtKB-UniRule"/>
</dbReference>
<dbReference type="CDD" id="cd02440">
    <property type="entry name" value="AdoMet_MTases"/>
    <property type="match status" value="1"/>
</dbReference>
<dbReference type="FunFam" id="3.30.300.110:FF:000001">
    <property type="entry name" value="tRNA (guanine(37)-N1)-methyltransferase"/>
    <property type="match status" value="1"/>
</dbReference>
<dbReference type="FunFam" id="3.40.50.150:FF:000225">
    <property type="entry name" value="tRNA (guanine(37)-N1)-methyltransferase"/>
    <property type="match status" value="1"/>
</dbReference>
<dbReference type="Gene3D" id="3.30.300.110">
    <property type="entry name" value="Met-10+ protein-like domains"/>
    <property type="match status" value="1"/>
</dbReference>
<dbReference type="Gene3D" id="3.40.50.150">
    <property type="entry name" value="Vaccinia Virus protein VP39"/>
    <property type="match status" value="1"/>
</dbReference>
<dbReference type="HAMAP" id="MF_03152">
    <property type="entry name" value="TRM5"/>
    <property type="match status" value="1"/>
</dbReference>
<dbReference type="InterPro" id="IPR030382">
    <property type="entry name" value="MeTrfase_TRM5/TYW2"/>
</dbReference>
<dbReference type="InterPro" id="IPR029063">
    <property type="entry name" value="SAM-dependent_MTases_sf"/>
</dbReference>
<dbReference type="InterPro" id="IPR056743">
    <property type="entry name" value="TRM5-TYW2-like_MTfase"/>
</dbReference>
<dbReference type="InterPro" id="IPR056744">
    <property type="entry name" value="TRM5/TYW2-like_N"/>
</dbReference>
<dbReference type="InterPro" id="IPR025792">
    <property type="entry name" value="tRNA_Gua_MeTrfase_euk"/>
</dbReference>
<dbReference type="PANTHER" id="PTHR23245:SF43">
    <property type="entry name" value="TRNA (GUANINE(37)-N1)-METHYLTRANSFERASE 2"/>
    <property type="match status" value="1"/>
</dbReference>
<dbReference type="PANTHER" id="PTHR23245">
    <property type="entry name" value="TRNA METHYLTRANSFERASE"/>
    <property type="match status" value="1"/>
</dbReference>
<dbReference type="Pfam" id="PF02475">
    <property type="entry name" value="TRM5-TYW2_MTfase"/>
    <property type="match status" value="1"/>
</dbReference>
<dbReference type="Pfam" id="PF25133">
    <property type="entry name" value="TYW2_N_2"/>
    <property type="match status" value="1"/>
</dbReference>
<dbReference type="SUPFAM" id="SSF53335">
    <property type="entry name" value="S-adenosyl-L-methionine-dependent methyltransferases"/>
    <property type="match status" value="1"/>
</dbReference>
<dbReference type="PROSITE" id="PS51684">
    <property type="entry name" value="SAM_MT_TRM5_TYW2"/>
    <property type="match status" value="1"/>
</dbReference>
<organism>
    <name type="scientific">Arabidopsis thaliana</name>
    <name type="common">Mouse-ear cress</name>
    <dbReference type="NCBI Taxonomy" id="3702"/>
    <lineage>
        <taxon>Eukaryota</taxon>
        <taxon>Viridiplantae</taxon>
        <taxon>Streptophyta</taxon>
        <taxon>Embryophyta</taxon>
        <taxon>Tracheophyta</taxon>
        <taxon>Spermatophyta</taxon>
        <taxon>Magnoliopsida</taxon>
        <taxon>eudicotyledons</taxon>
        <taxon>Gunneridae</taxon>
        <taxon>Pentapetalae</taxon>
        <taxon>rosids</taxon>
        <taxon>malvids</taxon>
        <taxon>Brassicales</taxon>
        <taxon>Brassicaceae</taxon>
        <taxon>Camelineae</taxon>
        <taxon>Arabidopsis</taxon>
    </lineage>
</organism>
<proteinExistence type="evidence at transcript level"/>
<protein>
    <recommendedName>
        <fullName evidence="1">tRNA (guanine(37)-N(1))-methyltransferase 2</fullName>
        <ecNumber evidence="1">2.1.1.228</ecNumber>
    </recommendedName>
    <alternativeName>
        <fullName evidence="1">M1G-methyltransferase 2</fullName>
    </alternativeName>
    <alternativeName>
        <fullName evidence="1">tRNA [GM37] methyltransferase 2</fullName>
    </alternativeName>
    <alternativeName>
        <fullName evidence="1">tRNA methyltransferase 5 homolog 2</fullName>
    </alternativeName>
</protein>
<reference key="1">
    <citation type="journal article" date="1999" name="Nature">
        <title>Sequence and analysis of chromosome 4 of the plant Arabidopsis thaliana.</title>
        <authorList>
            <person name="Mayer K.F.X."/>
            <person name="Schueller C."/>
            <person name="Wambutt R."/>
            <person name="Murphy G."/>
            <person name="Volckaert G."/>
            <person name="Pohl T."/>
            <person name="Duesterhoeft A."/>
            <person name="Stiekema W."/>
            <person name="Entian K.-D."/>
            <person name="Terryn N."/>
            <person name="Harris B."/>
            <person name="Ansorge W."/>
            <person name="Brandt P."/>
            <person name="Grivell L.A."/>
            <person name="Rieger M."/>
            <person name="Weichselgartner M."/>
            <person name="de Simone V."/>
            <person name="Obermaier B."/>
            <person name="Mache R."/>
            <person name="Mueller M."/>
            <person name="Kreis M."/>
            <person name="Delseny M."/>
            <person name="Puigdomenech P."/>
            <person name="Watson M."/>
            <person name="Schmidtheini T."/>
            <person name="Reichert B."/>
            <person name="Portetelle D."/>
            <person name="Perez-Alonso M."/>
            <person name="Boutry M."/>
            <person name="Bancroft I."/>
            <person name="Vos P."/>
            <person name="Hoheisel J."/>
            <person name="Zimmermann W."/>
            <person name="Wedler H."/>
            <person name="Ridley P."/>
            <person name="Langham S.-A."/>
            <person name="McCullagh B."/>
            <person name="Bilham L."/>
            <person name="Robben J."/>
            <person name="van der Schueren J."/>
            <person name="Grymonprez B."/>
            <person name="Chuang Y.-J."/>
            <person name="Vandenbussche F."/>
            <person name="Braeken M."/>
            <person name="Weltjens I."/>
            <person name="Voet M."/>
            <person name="Bastiaens I."/>
            <person name="Aert R."/>
            <person name="Defoor E."/>
            <person name="Weitzenegger T."/>
            <person name="Bothe G."/>
            <person name="Ramsperger U."/>
            <person name="Hilbert H."/>
            <person name="Braun M."/>
            <person name="Holzer E."/>
            <person name="Brandt A."/>
            <person name="Peters S."/>
            <person name="van Staveren M."/>
            <person name="Dirkse W."/>
            <person name="Mooijman P."/>
            <person name="Klein Lankhorst R."/>
            <person name="Rose M."/>
            <person name="Hauf J."/>
            <person name="Koetter P."/>
            <person name="Berneiser S."/>
            <person name="Hempel S."/>
            <person name="Feldpausch M."/>
            <person name="Lamberth S."/>
            <person name="Van den Daele H."/>
            <person name="De Keyser A."/>
            <person name="Buysshaert C."/>
            <person name="Gielen J."/>
            <person name="Villarroel R."/>
            <person name="De Clercq R."/>
            <person name="van Montagu M."/>
            <person name="Rogers J."/>
            <person name="Cronin A."/>
            <person name="Quail M.A."/>
            <person name="Bray-Allen S."/>
            <person name="Clark L."/>
            <person name="Doggett J."/>
            <person name="Hall S."/>
            <person name="Kay M."/>
            <person name="Lennard N."/>
            <person name="McLay K."/>
            <person name="Mayes R."/>
            <person name="Pettett A."/>
            <person name="Rajandream M.A."/>
            <person name="Lyne M."/>
            <person name="Benes V."/>
            <person name="Rechmann S."/>
            <person name="Borkova D."/>
            <person name="Bloecker H."/>
            <person name="Scharfe M."/>
            <person name="Grimm M."/>
            <person name="Loehnert T.-H."/>
            <person name="Dose S."/>
            <person name="de Haan M."/>
            <person name="Maarse A.C."/>
            <person name="Schaefer M."/>
            <person name="Mueller-Auer S."/>
            <person name="Gabel C."/>
            <person name="Fuchs M."/>
            <person name="Fartmann B."/>
            <person name="Granderath K."/>
            <person name="Dauner D."/>
            <person name="Herzl A."/>
            <person name="Neumann S."/>
            <person name="Argiriou A."/>
            <person name="Vitale D."/>
            <person name="Liguori R."/>
            <person name="Piravandi E."/>
            <person name="Massenet O."/>
            <person name="Quigley F."/>
            <person name="Clabauld G."/>
            <person name="Muendlein A."/>
            <person name="Felber R."/>
            <person name="Schnabl S."/>
            <person name="Hiller R."/>
            <person name="Schmidt W."/>
            <person name="Lecharny A."/>
            <person name="Aubourg S."/>
            <person name="Chefdor F."/>
            <person name="Cooke R."/>
            <person name="Berger C."/>
            <person name="Monfort A."/>
            <person name="Casacuberta E."/>
            <person name="Gibbons T."/>
            <person name="Weber N."/>
            <person name="Vandenbol M."/>
            <person name="Bargues M."/>
            <person name="Terol J."/>
            <person name="Torres A."/>
            <person name="Perez-Perez A."/>
            <person name="Purnelle B."/>
            <person name="Bent E."/>
            <person name="Johnson S."/>
            <person name="Tacon D."/>
            <person name="Jesse T."/>
            <person name="Heijnen L."/>
            <person name="Schwarz S."/>
            <person name="Scholler P."/>
            <person name="Heber S."/>
            <person name="Francs P."/>
            <person name="Bielke C."/>
            <person name="Frishman D."/>
            <person name="Haase D."/>
            <person name="Lemcke K."/>
            <person name="Mewes H.-W."/>
            <person name="Stocker S."/>
            <person name="Zaccaria P."/>
            <person name="Bevan M."/>
            <person name="Wilson R.K."/>
            <person name="de la Bastide M."/>
            <person name="Habermann K."/>
            <person name="Parnell L."/>
            <person name="Dedhia N."/>
            <person name="Gnoj L."/>
            <person name="Schutz K."/>
            <person name="Huang E."/>
            <person name="Spiegel L."/>
            <person name="Sekhon M."/>
            <person name="Murray J."/>
            <person name="Sheet P."/>
            <person name="Cordes M."/>
            <person name="Abu-Threideh J."/>
            <person name="Stoneking T."/>
            <person name="Kalicki J."/>
            <person name="Graves T."/>
            <person name="Harmon G."/>
            <person name="Edwards J."/>
            <person name="Latreille P."/>
            <person name="Courtney L."/>
            <person name="Cloud J."/>
            <person name="Abbott A."/>
            <person name="Scott K."/>
            <person name="Johnson D."/>
            <person name="Minx P."/>
            <person name="Bentley D."/>
            <person name="Fulton B."/>
            <person name="Miller N."/>
            <person name="Greco T."/>
            <person name="Kemp K."/>
            <person name="Kramer J."/>
            <person name="Fulton L."/>
            <person name="Mardis E."/>
            <person name="Dante M."/>
            <person name="Pepin K."/>
            <person name="Hillier L.W."/>
            <person name="Nelson J."/>
            <person name="Spieth J."/>
            <person name="Ryan E."/>
            <person name="Andrews S."/>
            <person name="Geisel C."/>
            <person name="Layman D."/>
            <person name="Du H."/>
            <person name="Ali J."/>
            <person name="Berghoff A."/>
            <person name="Jones K."/>
            <person name="Drone K."/>
            <person name="Cotton M."/>
            <person name="Joshu C."/>
            <person name="Antonoiu B."/>
            <person name="Zidanic M."/>
            <person name="Strong C."/>
            <person name="Sun H."/>
            <person name="Lamar B."/>
            <person name="Yordan C."/>
            <person name="Ma P."/>
            <person name="Zhong J."/>
            <person name="Preston R."/>
            <person name="Vil D."/>
            <person name="Shekher M."/>
            <person name="Matero A."/>
            <person name="Shah R."/>
            <person name="Swaby I.K."/>
            <person name="O'Shaughnessy A."/>
            <person name="Rodriguez M."/>
            <person name="Hoffman J."/>
            <person name="Till S."/>
            <person name="Granat S."/>
            <person name="Shohdy N."/>
            <person name="Hasegawa A."/>
            <person name="Hameed A."/>
            <person name="Lodhi M."/>
            <person name="Johnson A."/>
            <person name="Chen E."/>
            <person name="Marra M.A."/>
            <person name="Martienssen R."/>
            <person name="McCombie W.R."/>
        </authorList>
    </citation>
    <scope>NUCLEOTIDE SEQUENCE [LARGE SCALE GENOMIC DNA]</scope>
    <source>
        <strain>cv. Columbia</strain>
    </source>
</reference>
<reference key="2">
    <citation type="journal article" date="2017" name="Plant J.">
        <title>Araport11: a complete reannotation of the Arabidopsis thaliana reference genome.</title>
        <authorList>
            <person name="Cheng C.Y."/>
            <person name="Krishnakumar V."/>
            <person name="Chan A.P."/>
            <person name="Thibaud-Nissen F."/>
            <person name="Schobel S."/>
            <person name="Town C.D."/>
        </authorList>
    </citation>
    <scope>GENOME REANNOTATION</scope>
    <source>
        <strain>cv. Columbia</strain>
    </source>
</reference>
<reference key="3">
    <citation type="submission" date="2003-10" db="EMBL/GenBank/DDBJ databases">
        <title>Arabidopsis ORF clones.</title>
        <authorList>
            <person name="Cheuk R.F."/>
            <person name="Chen H."/>
            <person name="Kim C.J."/>
            <person name="Shinn P."/>
            <person name="Carninci P."/>
            <person name="Hayashizaki Y."/>
            <person name="Ishida J."/>
            <person name="Kamiya A."/>
            <person name="Kawai J."/>
            <person name="Narusaka M."/>
            <person name="Sakurai T."/>
            <person name="Satou M."/>
            <person name="Seki M."/>
            <person name="Shinozaki K."/>
            <person name="Ecker J.R."/>
        </authorList>
    </citation>
    <scope>NUCLEOTIDE SEQUENCE [LARGE SCALE MRNA]</scope>
    <source>
        <strain>cv. Columbia</strain>
    </source>
</reference>
<reference key="4">
    <citation type="submission" date="2006-07" db="EMBL/GenBank/DDBJ databases">
        <title>Large-scale analysis of RIKEN Arabidopsis full-length (RAFL) cDNAs.</title>
        <authorList>
            <person name="Totoki Y."/>
            <person name="Seki M."/>
            <person name="Ishida J."/>
            <person name="Nakajima M."/>
            <person name="Enju A."/>
            <person name="Kamiya A."/>
            <person name="Narusaka M."/>
            <person name="Shin-i T."/>
            <person name="Nakagawa M."/>
            <person name="Sakamoto N."/>
            <person name="Oishi K."/>
            <person name="Kohara Y."/>
            <person name="Kobayashi M."/>
            <person name="Toyoda A."/>
            <person name="Sakaki Y."/>
            <person name="Sakurai T."/>
            <person name="Iida K."/>
            <person name="Akiyama K."/>
            <person name="Satou M."/>
            <person name="Toyoda T."/>
            <person name="Konagaya A."/>
            <person name="Carninci P."/>
            <person name="Kawai J."/>
            <person name="Hayashizaki Y."/>
            <person name="Shinozaki K."/>
        </authorList>
    </citation>
    <scope>NUCLEOTIDE SEQUENCE [LARGE SCALE MRNA]</scope>
    <source>
        <strain>cv. Columbia</strain>
    </source>
</reference>
<sequence>MVSKLSLFRANSLPFPVISSYSARFILKPYPKPKTLIFCVFSSNLSSTTFPYGPSLLKGKKPVLDDIRLASIGRDRDAHRGKIGEFDESIEKDVLLNEDEFTRVFEISAIRVPAKDCFALENRLRGHLLNWPRIRNIARVPGDEIEEDVVKLLGRETDEEEEDEDSVVDSVNRRIRGKAEGDGERLSSVLHRDKLARTFNSTGYLKFRNLAKISRPKRKRKTERTREGKEKEIASRRNEMAVVEVVETRGGEEDFEGLLGEGYGSRGRWRGSTRLLLLDEKYSGEEVQDLPEAIKVLFAEAKMADASLSFELVKCRLTLFYDYWPMIEILEAVLPKGMIVPSAFEMVGHIAHLNLRDEHLPYKRLIAKVVLDKNQPKIQTVVNKIDPIHNDFRTMQLEVLAGNHSLVTLVVENGLRFHVDLARVYWNSKLGTERQRLLLGFDQNDVVCDVFAGVGPIALAAARIVKRVYANDLNPHAVEFMEQNSVVNKLEKRIEIFNMDGRRFIKAMFSSEKGQKVTQVVMNLPKDAAESLDAFRGVYNDRHRDEGLSFPTIHVYGFSKASDPEFDFHERIRIALSEVAVDVKMRKVRLVAPGKWMLCASFILPKNVAFSRKNLSYVD</sequence>
<accession>Q6NQ64</accession>
<accession>O81837</accession>
<gene>
    <name type="ordered locus">At4g27340</name>
    <name type="ORF">F27G19.9</name>
    <name type="ORF">M4I22</name>
</gene>
<keyword id="KW-0963">Cytoplasm</keyword>
<keyword id="KW-0489">Methyltransferase</keyword>
<keyword id="KW-0496">Mitochondrion</keyword>
<keyword id="KW-0539">Nucleus</keyword>
<keyword id="KW-1185">Reference proteome</keyword>
<keyword id="KW-0949">S-adenosyl-L-methionine</keyword>
<keyword id="KW-0808">Transferase</keyword>
<keyword id="KW-0809">Transit peptide</keyword>
<keyword id="KW-0819">tRNA processing</keyword>
<evidence type="ECO:0000255" key="1">
    <source>
        <dbReference type="HAMAP-Rule" id="MF_03152"/>
    </source>
</evidence>
<evidence type="ECO:0000305" key="2"/>